<sequence>LKSLTVLAESPVESRELLTELGVEKVIVEGKTAARVTQGDSDKPKQVPPNQEGKEEAPVATAAQPKEPAEQPDAKEGPAEGQQPGGVDNAAEASPAAVSPSRPQPAESEVGNSSPGEKGSDAPSTEARGMELEGKEEEGEAMVEDEEEAKIPKAAQPKSESKENAEDNESGSTDSGQENSGETRLLRSGTYSDRTESKAYAAVTHKCEDCGKEFTHTGNFKRHIRIHTGEKPFSCRECNKAFSDPAACKAHEKTHSPLKPYGCEECGKSYRLISLLNLHKKRHTGEAKYRCDDCGKLFTTSGNLKRHQLVHSGEKPYQCDYCGRSFSDPTSKMRHLETHDTDKEHKCPHCDKKFNQVGNLKAHLKIHIADGPLKCRECGNEFTTSGNLKRHLRIHSGEKPYVCVHCQRQFADPGALQAHVPIHTGEKPCQCLICGKAFTQASSLIAHVRHDTGEKPYVCERCGKRFVQSSQLANHIRHHDNIRPHKCTVCNKAFVNVGDLSKHIIIHTGEKPFLCDKCGRGFNRVDNLRSHVKTVHQGKAGMKILEPEDGSELNIVTVASDDMVTLATEALAATAVTQLTVVPVAAAVTADETEALKAEITKAVKQVQEADPNTQILYACDSCGEKFLDATSLAQHVRIHTAQALVMFQADTDFYQQYGAAAATWQTEQVIPATELLFRPRDSPQEAPAAPLAPVPLAGEGQAPAE</sequence>
<gene>
    <name type="primary">ZBTB17</name>
    <name type="synonym">ZNF151</name>
</gene>
<reference key="1">
    <citation type="journal article" date="1995" name="Biochem. J.">
        <title>An unusual arrangement of 13 zinc fingers in the vertebrate gene Z13.</title>
        <authorList>
            <person name="Schulz T.C."/>
            <person name="Hopwood B."/>
            <person name="Rathjen P.D."/>
            <person name="Wells J.R.E."/>
        </authorList>
    </citation>
    <scope>NUCLEOTIDE SEQUENCE [MRNA]</scope>
</reference>
<feature type="chain" id="PRO_0000047732" description="Zinc finger and BTB domain-containing protein 17">
    <location>
        <begin position="1" status="less than"/>
        <end position="706"/>
    </location>
</feature>
<feature type="domain" description="BTB" evidence="3">
    <location>
        <begin position="1" status="less than"/>
        <end position="12"/>
    </location>
</feature>
<feature type="zinc finger region" description="C2H2-type 1" evidence="4">
    <location>
        <begin position="205"/>
        <end position="227"/>
    </location>
</feature>
<feature type="zinc finger region" description="C2H2-type 2" evidence="4">
    <location>
        <begin position="233"/>
        <end position="255"/>
    </location>
</feature>
<feature type="zinc finger region" description="C2H2-type 3" evidence="4">
    <location>
        <begin position="261"/>
        <end position="283"/>
    </location>
</feature>
<feature type="zinc finger region" description="C2H2-type 4" evidence="4">
    <location>
        <begin position="289"/>
        <end position="311"/>
    </location>
</feature>
<feature type="zinc finger region" description="C2H2-type 5" evidence="4">
    <location>
        <begin position="317"/>
        <end position="339"/>
    </location>
</feature>
<feature type="zinc finger region" description="C2H2-type 6" evidence="4">
    <location>
        <begin position="345"/>
        <end position="367"/>
    </location>
</feature>
<feature type="zinc finger region" description="C2H2-type 7" evidence="4">
    <location>
        <begin position="373"/>
        <end position="395"/>
    </location>
</feature>
<feature type="zinc finger region" description="C2H2-type 8" evidence="4">
    <location>
        <begin position="401"/>
        <end position="423"/>
    </location>
</feature>
<feature type="zinc finger region" description="C2H2-type 9" evidence="4">
    <location>
        <begin position="427"/>
        <end position="450"/>
    </location>
</feature>
<feature type="zinc finger region" description="C2H2-type 10" evidence="4">
    <location>
        <begin position="457"/>
        <end position="479"/>
    </location>
</feature>
<feature type="zinc finger region" description="C2H2-type 11" evidence="4">
    <location>
        <begin position="485"/>
        <end position="507"/>
    </location>
</feature>
<feature type="zinc finger region" description="C2H2-type 12" evidence="4">
    <location>
        <begin position="513"/>
        <end position="536"/>
    </location>
</feature>
<feature type="zinc finger region" description="C2H2-type 13" evidence="4">
    <location>
        <begin position="618"/>
        <end position="640"/>
    </location>
</feature>
<feature type="region of interest" description="Disordered" evidence="5">
    <location>
        <begin position="32"/>
        <end position="194"/>
    </location>
</feature>
<feature type="region of interest" description="Disordered" evidence="5">
    <location>
        <begin position="680"/>
        <end position="706"/>
    </location>
</feature>
<feature type="compositionally biased region" description="Basic and acidic residues" evidence="5">
    <location>
        <begin position="67"/>
        <end position="78"/>
    </location>
</feature>
<feature type="compositionally biased region" description="Low complexity" evidence="5">
    <location>
        <begin position="90"/>
        <end position="106"/>
    </location>
</feature>
<feature type="compositionally biased region" description="Acidic residues" evidence="5">
    <location>
        <begin position="134"/>
        <end position="148"/>
    </location>
</feature>
<feature type="compositionally biased region" description="Polar residues" evidence="5">
    <location>
        <begin position="170"/>
        <end position="182"/>
    </location>
</feature>
<feature type="compositionally biased region" description="Low complexity" evidence="5">
    <location>
        <begin position="687"/>
        <end position="698"/>
    </location>
</feature>
<feature type="non-terminal residue">
    <location>
        <position position="1"/>
    </location>
</feature>
<name>ZBT17_CHICK</name>
<evidence type="ECO:0000250" key="1"/>
<evidence type="ECO:0000250" key="2">
    <source>
        <dbReference type="UniProtKB" id="Q13105"/>
    </source>
</evidence>
<evidence type="ECO:0000255" key="3">
    <source>
        <dbReference type="PROSITE-ProRule" id="PRU00037"/>
    </source>
</evidence>
<evidence type="ECO:0000255" key="4">
    <source>
        <dbReference type="PROSITE-ProRule" id="PRU00042"/>
    </source>
</evidence>
<evidence type="ECO:0000256" key="5">
    <source>
        <dbReference type="SAM" id="MobiDB-lite"/>
    </source>
</evidence>
<evidence type="ECO:0000305" key="6"/>
<protein>
    <recommendedName>
        <fullName>Zinc finger and BTB domain-containing protein 17</fullName>
    </recommendedName>
    <alternativeName>
        <fullName>Zinc finger protein 151</fullName>
    </alternativeName>
    <alternativeName>
        <fullName>Zinc finger protein Z13</fullName>
    </alternativeName>
</protein>
<comment type="function">
    <text evidence="2">Transcription factor that can function as an activator or repressor depending on its binding partners, and by targeting negative regulators of cell cycle progression. Plays a critical role in early lymphocyte development, where it is essential to prevent apoptosis in lymphoid precursors, allowing them to survive in response to IL7 and undergo proper lineage commitment. Has been shown to bind to the promoters of adenovirus major late protein and cyclin D1 and activate transcription. Required for early embryonic development during gastrulation. Represses RB1 transcription.</text>
</comment>
<comment type="subcellular location">
    <subcellularLocation>
        <location evidence="1">Nucleus</location>
    </subcellularLocation>
</comment>
<comment type="similarity">
    <text evidence="6">Belongs to the krueppel C2H2-type zinc-finger protein family.</text>
</comment>
<keyword id="KW-0238">DNA-binding</keyword>
<keyword id="KW-0479">Metal-binding</keyword>
<keyword id="KW-0539">Nucleus</keyword>
<keyword id="KW-1185">Reference proteome</keyword>
<keyword id="KW-0677">Repeat</keyword>
<keyword id="KW-0804">Transcription</keyword>
<keyword id="KW-0805">Transcription regulation</keyword>
<keyword id="KW-0862">Zinc</keyword>
<keyword id="KW-0863">Zinc-finger</keyword>
<accession>Q90625</accession>
<proteinExistence type="evidence at transcript level"/>
<dbReference type="EMBL" id="U14555">
    <property type="protein sequence ID" value="AAA21556.1"/>
    <property type="molecule type" value="mRNA"/>
</dbReference>
<dbReference type="SMR" id="Q90625"/>
<dbReference type="FunCoup" id="Q90625">
    <property type="interactions" value="825"/>
</dbReference>
<dbReference type="STRING" id="9031.ENSGALP00000052675"/>
<dbReference type="PaxDb" id="9031-ENSGALP00000039023"/>
<dbReference type="VEuPathDB" id="HostDB:geneid_396541"/>
<dbReference type="eggNOG" id="KOG1721">
    <property type="taxonomic scope" value="Eukaryota"/>
</dbReference>
<dbReference type="InParanoid" id="Q90625"/>
<dbReference type="OrthoDB" id="10018191at2759"/>
<dbReference type="PhylomeDB" id="Q90625"/>
<dbReference type="Proteomes" id="UP000000539">
    <property type="component" value="Unassembled WGS sequence"/>
</dbReference>
<dbReference type="GO" id="GO:0005654">
    <property type="term" value="C:nucleoplasm"/>
    <property type="evidence" value="ECO:0000318"/>
    <property type="project" value="GO_Central"/>
</dbReference>
<dbReference type="GO" id="GO:0001227">
    <property type="term" value="F:DNA-binding transcription repressor activity, RNA polymerase II-specific"/>
    <property type="evidence" value="ECO:0000318"/>
    <property type="project" value="GO_Central"/>
</dbReference>
<dbReference type="GO" id="GO:0000978">
    <property type="term" value="F:RNA polymerase II cis-regulatory region sequence-specific DNA binding"/>
    <property type="evidence" value="ECO:0000318"/>
    <property type="project" value="GO_Central"/>
</dbReference>
<dbReference type="GO" id="GO:0008270">
    <property type="term" value="F:zinc ion binding"/>
    <property type="evidence" value="ECO:0007669"/>
    <property type="project" value="UniProtKB-KW"/>
</dbReference>
<dbReference type="GO" id="GO:0000122">
    <property type="term" value="P:negative regulation of transcription by RNA polymerase II"/>
    <property type="evidence" value="ECO:0000318"/>
    <property type="project" value="GO_Central"/>
</dbReference>
<dbReference type="GO" id="GO:0001817">
    <property type="term" value="P:regulation of cytokine production"/>
    <property type="evidence" value="ECO:0000318"/>
    <property type="project" value="GO_Central"/>
</dbReference>
<dbReference type="GO" id="GO:0002682">
    <property type="term" value="P:regulation of immune system process"/>
    <property type="evidence" value="ECO:0000318"/>
    <property type="project" value="GO_Central"/>
</dbReference>
<dbReference type="FunFam" id="3.30.160.60:FF:004080">
    <property type="match status" value="1"/>
</dbReference>
<dbReference type="FunFam" id="3.30.160.60:FF:005277">
    <property type="match status" value="1"/>
</dbReference>
<dbReference type="FunFam" id="3.30.160.60:FF:005305">
    <property type="match status" value="1"/>
</dbReference>
<dbReference type="FunFam" id="3.30.160.60:FF:000325">
    <property type="entry name" value="ZFP90 zinc finger protein"/>
    <property type="match status" value="1"/>
</dbReference>
<dbReference type="FunFam" id="3.30.160.60:FF:000831">
    <property type="entry name" value="Zinc finger and BTB domain-containing protein 17"/>
    <property type="match status" value="1"/>
</dbReference>
<dbReference type="FunFam" id="3.30.160.60:FF:001021">
    <property type="entry name" value="zinc finger and BTB domain-containing protein 17 isoform X1"/>
    <property type="match status" value="1"/>
</dbReference>
<dbReference type="FunFam" id="3.30.160.60:FF:001022">
    <property type="entry name" value="zinc finger and BTB domain-containing protein 17 isoform X1"/>
    <property type="match status" value="1"/>
</dbReference>
<dbReference type="FunFam" id="3.30.160.60:FF:001032">
    <property type="entry name" value="zinc finger and BTB domain-containing protein 17 isoform X1"/>
    <property type="match status" value="1"/>
</dbReference>
<dbReference type="FunFam" id="3.30.160.60:FF:000225">
    <property type="entry name" value="zinc finger and BTB domain-containing protein 17 isoform X2"/>
    <property type="match status" value="1"/>
</dbReference>
<dbReference type="FunFam" id="3.30.160.60:FF:000346">
    <property type="entry name" value="zinc finger and BTB domain-containing protein 17 isoform X2"/>
    <property type="match status" value="1"/>
</dbReference>
<dbReference type="FunFam" id="3.30.160.60:FF:000072">
    <property type="entry name" value="zinc finger protein 143 isoform X1"/>
    <property type="match status" value="1"/>
</dbReference>
<dbReference type="FunFam" id="3.30.160.60:FF:002343">
    <property type="entry name" value="Zinc finger protein 33A"/>
    <property type="match status" value="1"/>
</dbReference>
<dbReference type="Gene3D" id="3.30.160.60">
    <property type="entry name" value="Classic Zinc Finger"/>
    <property type="match status" value="13"/>
</dbReference>
<dbReference type="InterPro" id="IPR050589">
    <property type="entry name" value="Ikaros_C2H2-ZF"/>
</dbReference>
<dbReference type="InterPro" id="IPR041697">
    <property type="entry name" value="Znf-C2H2_11"/>
</dbReference>
<dbReference type="InterPro" id="IPR036236">
    <property type="entry name" value="Znf_C2H2_sf"/>
</dbReference>
<dbReference type="InterPro" id="IPR013087">
    <property type="entry name" value="Znf_C2H2_type"/>
</dbReference>
<dbReference type="PANTHER" id="PTHR24404:SF114">
    <property type="entry name" value="KLUMPFUSS, ISOFORM B-RELATED"/>
    <property type="match status" value="1"/>
</dbReference>
<dbReference type="PANTHER" id="PTHR24404">
    <property type="entry name" value="ZINC FINGER PROTEIN"/>
    <property type="match status" value="1"/>
</dbReference>
<dbReference type="Pfam" id="PF00096">
    <property type="entry name" value="zf-C2H2"/>
    <property type="match status" value="8"/>
</dbReference>
<dbReference type="Pfam" id="PF16622">
    <property type="entry name" value="zf-C2H2_11"/>
    <property type="match status" value="1"/>
</dbReference>
<dbReference type="SMART" id="SM00355">
    <property type="entry name" value="ZnF_C2H2"/>
    <property type="match status" value="13"/>
</dbReference>
<dbReference type="SUPFAM" id="SSF57667">
    <property type="entry name" value="beta-beta-alpha zinc fingers"/>
    <property type="match status" value="8"/>
</dbReference>
<dbReference type="PROSITE" id="PS00028">
    <property type="entry name" value="ZINC_FINGER_C2H2_1"/>
    <property type="match status" value="12"/>
</dbReference>
<dbReference type="PROSITE" id="PS50157">
    <property type="entry name" value="ZINC_FINGER_C2H2_2"/>
    <property type="match status" value="13"/>
</dbReference>
<organism>
    <name type="scientific">Gallus gallus</name>
    <name type="common">Chicken</name>
    <dbReference type="NCBI Taxonomy" id="9031"/>
    <lineage>
        <taxon>Eukaryota</taxon>
        <taxon>Metazoa</taxon>
        <taxon>Chordata</taxon>
        <taxon>Craniata</taxon>
        <taxon>Vertebrata</taxon>
        <taxon>Euteleostomi</taxon>
        <taxon>Archelosauria</taxon>
        <taxon>Archosauria</taxon>
        <taxon>Dinosauria</taxon>
        <taxon>Saurischia</taxon>
        <taxon>Theropoda</taxon>
        <taxon>Coelurosauria</taxon>
        <taxon>Aves</taxon>
        <taxon>Neognathae</taxon>
        <taxon>Galloanserae</taxon>
        <taxon>Galliformes</taxon>
        <taxon>Phasianidae</taxon>
        <taxon>Phasianinae</taxon>
        <taxon>Gallus</taxon>
    </lineage>
</organism>